<proteinExistence type="predicted"/>
<organismHost>
    <name type="scientific">Dryophytes versicolor</name>
    <name type="common">chameleon treefrog</name>
    <dbReference type="NCBI Taxonomy" id="30343"/>
</organismHost>
<organismHost>
    <name type="scientific">Lithobates pipiens</name>
    <name type="common">Northern leopard frog</name>
    <name type="synonym">Rana pipiens</name>
    <dbReference type="NCBI Taxonomy" id="8404"/>
</organismHost>
<organismHost>
    <name type="scientific">Lithobates sylvaticus</name>
    <name type="common">Wood frog</name>
    <name type="synonym">Rana sylvatica</name>
    <dbReference type="NCBI Taxonomy" id="45438"/>
</organismHost>
<organismHost>
    <name type="scientific">Notophthalmus viridescens</name>
    <name type="common">Eastern newt</name>
    <name type="synonym">Triturus viridescens</name>
    <dbReference type="NCBI Taxonomy" id="8316"/>
</organismHost>
<accession>Q6GZN1</accession>
<name>094L_FRG3G</name>
<organism>
    <name type="scientific">Frog virus 3 (isolate Goorha)</name>
    <name type="common">FV-3</name>
    <dbReference type="NCBI Taxonomy" id="654924"/>
    <lineage>
        <taxon>Viruses</taxon>
        <taxon>Varidnaviria</taxon>
        <taxon>Bamfordvirae</taxon>
        <taxon>Nucleocytoviricota</taxon>
        <taxon>Megaviricetes</taxon>
        <taxon>Pimascovirales</taxon>
        <taxon>Iridoviridae</taxon>
        <taxon>Alphairidovirinae</taxon>
        <taxon>Ranavirus</taxon>
        <taxon>Frog virus 3</taxon>
    </lineage>
</organism>
<evidence type="ECO:0000256" key="1">
    <source>
        <dbReference type="SAM" id="MobiDB-lite"/>
    </source>
</evidence>
<reference key="1">
    <citation type="journal article" date="2004" name="Virology">
        <title>Comparative genomic analyses of frog virus 3, type species of the genus Ranavirus (family Iridoviridae).</title>
        <authorList>
            <person name="Tan W.G."/>
            <person name="Barkman T.J."/>
            <person name="Gregory Chinchar V."/>
            <person name="Essani K."/>
        </authorList>
    </citation>
    <scope>NUCLEOTIDE SEQUENCE [LARGE SCALE GENOMIC DNA]</scope>
</reference>
<dbReference type="EMBL" id="AY548484">
    <property type="protein sequence ID" value="AAT09754.1"/>
    <property type="molecule type" value="Genomic_DNA"/>
</dbReference>
<dbReference type="RefSeq" id="YP_031673.1">
    <property type="nucleotide sequence ID" value="NC_005946.1"/>
</dbReference>
<dbReference type="SMR" id="Q6GZN1"/>
<dbReference type="KEGG" id="vg:2947787"/>
<dbReference type="Proteomes" id="UP000008770">
    <property type="component" value="Segment"/>
</dbReference>
<dbReference type="Gene3D" id="3.40.960.10">
    <property type="entry name" value="VSR Endonuclease"/>
    <property type="match status" value="1"/>
</dbReference>
<keyword id="KW-1185">Reference proteome</keyword>
<feature type="chain" id="PRO_0000410522" description="Uncharacterized protein 094L">
    <location>
        <begin position="1"/>
        <end position="155"/>
    </location>
</feature>
<feature type="region of interest" description="Disordered" evidence="1">
    <location>
        <begin position="28"/>
        <end position="52"/>
    </location>
</feature>
<feature type="compositionally biased region" description="Basic and acidic residues" evidence="1">
    <location>
        <begin position="28"/>
        <end position="38"/>
    </location>
</feature>
<sequence>MDPEGMMYGFGVSFGISWAILKLFGREKKGKDRPREDGTQQQPSESKGEAACRDAAYRITGKRFEKIRHKGIVNPDTGRALELDCYSKSLKTAIEYQGRQHYEYVSVFHKGGRQDLRKQHERDCYKRAACQKLGIKLIEVPYTVKDIEGYLRKVL</sequence>
<gene>
    <name type="ORF">FV3-094L</name>
</gene>
<protein>
    <recommendedName>
        <fullName>Uncharacterized protein 094L</fullName>
    </recommendedName>
</protein>